<protein>
    <recommendedName>
        <fullName evidence="1">Imidazole glycerol phosphate synthase subunit HisF</fullName>
        <ecNumber evidence="1">4.3.2.10</ecNumber>
    </recommendedName>
    <alternativeName>
        <fullName evidence="1">IGP synthase cyclase subunit</fullName>
    </alternativeName>
    <alternativeName>
        <fullName evidence="1">IGP synthase subunit HisF</fullName>
    </alternativeName>
    <alternativeName>
        <fullName evidence="1">ImGP synthase subunit HisF</fullName>
        <shortName evidence="1">IGPS subunit HisF</shortName>
    </alternativeName>
</protein>
<reference key="1">
    <citation type="submission" date="2007-08" db="EMBL/GenBank/DDBJ databases">
        <title>Complete sequence of Shewanella sediminis HAW-EB3.</title>
        <authorList>
            <consortium name="US DOE Joint Genome Institute"/>
            <person name="Copeland A."/>
            <person name="Lucas S."/>
            <person name="Lapidus A."/>
            <person name="Barry K."/>
            <person name="Glavina del Rio T."/>
            <person name="Dalin E."/>
            <person name="Tice H."/>
            <person name="Pitluck S."/>
            <person name="Chertkov O."/>
            <person name="Brettin T."/>
            <person name="Bruce D."/>
            <person name="Detter J.C."/>
            <person name="Han C."/>
            <person name="Schmutz J."/>
            <person name="Larimer F."/>
            <person name="Land M."/>
            <person name="Hauser L."/>
            <person name="Kyrpides N."/>
            <person name="Kim E."/>
            <person name="Zhao J.-S."/>
            <person name="Richardson P."/>
        </authorList>
    </citation>
    <scope>NUCLEOTIDE SEQUENCE [LARGE SCALE GENOMIC DNA]</scope>
    <source>
        <strain>HAW-EB3</strain>
    </source>
</reference>
<comment type="function">
    <text evidence="1">IGPS catalyzes the conversion of PRFAR and glutamine to IGP, AICAR and glutamate. The HisF subunit catalyzes the cyclization activity that produces IGP and AICAR from PRFAR using the ammonia provided by the HisH subunit.</text>
</comment>
<comment type="catalytic activity">
    <reaction evidence="1">
        <text>5-[(5-phospho-1-deoxy-D-ribulos-1-ylimino)methylamino]-1-(5-phospho-beta-D-ribosyl)imidazole-4-carboxamide + L-glutamine = D-erythro-1-(imidazol-4-yl)glycerol 3-phosphate + 5-amino-1-(5-phospho-beta-D-ribosyl)imidazole-4-carboxamide + L-glutamate + H(+)</text>
        <dbReference type="Rhea" id="RHEA:24793"/>
        <dbReference type="ChEBI" id="CHEBI:15378"/>
        <dbReference type="ChEBI" id="CHEBI:29985"/>
        <dbReference type="ChEBI" id="CHEBI:58278"/>
        <dbReference type="ChEBI" id="CHEBI:58359"/>
        <dbReference type="ChEBI" id="CHEBI:58475"/>
        <dbReference type="ChEBI" id="CHEBI:58525"/>
        <dbReference type="EC" id="4.3.2.10"/>
    </reaction>
</comment>
<comment type="pathway">
    <text evidence="1">Amino-acid biosynthesis; L-histidine biosynthesis; L-histidine from 5-phospho-alpha-D-ribose 1-diphosphate: step 5/9.</text>
</comment>
<comment type="subunit">
    <text evidence="1">Heterodimer of HisH and HisF.</text>
</comment>
<comment type="subcellular location">
    <subcellularLocation>
        <location evidence="1">Cytoplasm</location>
    </subcellularLocation>
</comment>
<comment type="similarity">
    <text evidence="1">Belongs to the HisA/HisF family.</text>
</comment>
<name>HIS6_SHESH</name>
<organism>
    <name type="scientific">Shewanella sediminis (strain HAW-EB3)</name>
    <dbReference type="NCBI Taxonomy" id="425104"/>
    <lineage>
        <taxon>Bacteria</taxon>
        <taxon>Pseudomonadati</taxon>
        <taxon>Pseudomonadota</taxon>
        <taxon>Gammaproteobacteria</taxon>
        <taxon>Alteromonadales</taxon>
        <taxon>Shewanellaceae</taxon>
        <taxon>Shewanella</taxon>
    </lineage>
</organism>
<evidence type="ECO:0000255" key="1">
    <source>
        <dbReference type="HAMAP-Rule" id="MF_01013"/>
    </source>
</evidence>
<dbReference type="EC" id="4.3.2.10" evidence="1"/>
<dbReference type="EMBL" id="CP000821">
    <property type="protein sequence ID" value="ABV37154.1"/>
    <property type="molecule type" value="Genomic_DNA"/>
</dbReference>
<dbReference type="RefSeq" id="WP_012142887.1">
    <property type="nucleotide sequence ID" value="NC_009831.1"/>
</dbReference>
<dbReference type="SMR" id="A8FWD1"/>
<dbReference type="STRING" id="425104.Ssed_2547"/>
<dbReference type="KEGG" id="sse:Ssed_2547"/>
<dbReference type="eggNOG" id="COG0107">
    <property type="taxonomic scope" value="Bacteria"/>
</dbReference>
<dbReference type="HOGENOM" id="CLU_048577_4_0_6"/>
<dbReference type="OrthoDB" id="9781903at2"/>
<dbReference type="UniPathway" id="UPA00031">
    <property type="reaction ID" value="UER00010"/>
</dbReference>
<dbReference type="Proteomes" id="UP000002015">
    <property type="component" value="Chromosome"/>
</dbReference>
<dbReference type="GO" id="GO:0005737">
    <property type="term" value="C:cytoplasm"/>
    <property type="evidence" value="ECO:0007669"/>
    <property type="project" value="UniProtKB-SubCell"/>
</dbReference>
<dbReference type="GO" id="GO:0000107">
    <property type="term" value="F:imidazoleglycerol-phosphate synthase activity"/>
    <property type="evidence" value="ECO:0007669"/>
    <property type="project" value="UniProtKB-UniRule"/>
</dbReference>
<dbReference type="GO" id="GO:0016829">
    <property type="term" value="F:lyase activity"/>
    <property type="evidence" value="ECO:0007669"/>
    <property type="project" value="UniProtKB-KW"/>
</dbReference>
<dbReference type="GO" id="GO:0000105">
    <property type="term" value="P:L-histidine biosynthetic process"/>
    <property type="evidence" value="ECO:0007669"/>
    <property type="project" value="UniProtKB-UniRule"/>
</dbReference>
<dbReference type="CDD" id="cd04731">
    <property type="entry name" value="HisF"/>
    <property type="match status" value="1"/>
</dbReference>
<dbReference type="FunFam" id="3.20.20.70:FF:000006">
    <property type="entry name" value="Imidazole glycerol phosphate synthase subunit HisF"/>
    <property type="match status" value="1"/>
</dbReference>
<dbReference type="Gene3D" id="3.20.20.70">
    <property type="entry name" value="Aldolase class I"/>
    <property type="match status" value="1"/>
</dbReference>
<dbReference type="HAMAP" id="MF_01013">
    <property type="entry name" value="HisF"/>
    <property type="match status" value="1"/>
</dbReference>
<dbReference type="InterPro" id="IPR013785">
    <property type="entry name" value="Aldolase_TIM"/>
</dbReference>
<dbReference type="InterPro" id="IPR006062">
    <property type="entry name" value="His_biosynth"/>
</dbReference>
<dbReference type="InterPro" id="IPR004651">
    <property type="entry name" value="HisF"/>
</dbReference>
<dbReference type="InterPro" id="IPR050064">
    <property type="entry name" value="IGPS_HisA/HisF"/>
</dbReference>
<dbReference type="InterPro" id="IPR011060">
    <property type="entry name" value="RibuloseP-bd_barrel"/>
</dbReference>
<dbReference type="NCBIfam" id="TIGR00735">
    <property type="entry name" value="hisF"/>
    <property type="match status" value="1"/>
</dbReference>
<dbReference type="PANTHER" id="PTHR21235:SF2">
    <property type="entry name" value="IMIDAZOLE GLYCEROL PHOSPHATE SYNTHASE HISHF"/>
    <property type="match status" value="1"/>
</dbReference>
<dbReference type="PANTHER" id="PTHR21235">
    <property type="entry name" value="IMIDAZOLE GLYCEROL PHOSPHATE SYNTHASE SUBUNIT HISF/H IGP SYNTHASE SUBUNIT HISF/H"/>
    <property type="match status" value="1"/>
</dbReference>
<dbReference type="Pfam" id="PF00977">
    <property type="entry name" value="His_biosynth"/>
    <property type="match status" value="1"/>
</dbReference>
<dbReference type="SUPFAM" id="SSF51366">
    <property type="entry name" value="Ribulose-phoshate binding barrel"/>
    <property type="match status" value="1"/>
</dbReference>
<gene>
    <name evidence="1" type="primary">hisF</name>
    <name type="ordered locus">Ssed_2547</name>
</gene>
<proteinExistence type="inferred from homology"/>
<keyword id="KW-0028">Amino-acid biosynthesis</keyword>
<keyword id="KW-0963">Cytoplasm</keyword>
<keyword id="KW-0368">Histidine biosynthesis</keyword>
<keyword id="KW-0456">Lyase</keyword>
<keyword id="KW-1185">Reference proteome</keyword>
<sequence length="257" mass="28482">MLAKRIVPCLDVKEGKVVKGVQFRNHEIVGDIVPLAARYAEEGADELVFYDITASAHDRVIDKSWVSRVAERIDIPFCVAGGIKTIAQAREKLAFGADKISINSPALTDPSLIERLQDEFGRQCIVIGIDSYFDAQSNSYKVKQFTGDEAATKDTQWFTQDWVQEVQKRGCGEIVLNVMNQDGVRQGYDLKQLSIVREICDVPLIASGGAGTMAHFKDVFEIARVDAALAASVFHKGIIDIGELKNYLFENSIAIRR</sequence>
<feature type="chain" id="PRO_1000084081" description="Imidazole glycerol phosphate synthase subunit HisF">
    <location>
        <begin position="1"/>
        <end position="257"/>
    </location>
</feature>
<feature type="active site" evidence="1">
    <location>
        <position position="11"/>
    </location>
</feature>
<feature type="active site" evidence="1">
    <location>
        <position position="130"/>
    </location>
</feature>
<accession>A8FWD1</accession>